<accession>A5VZ57</accession>
<name>HIS8_PSEP1</name>
<sequence length="348" mass="38781">MSRFWSPFVKDLVPYVPGEQPKLARLVKLNTNENPYGPSPKALEAMRGELNDNLRLYPDPNGDRLKQAVAEYYGVTPAQVFVGNGSDEVLAHIFHGLFQHDAPLLFPDISYSFYPVYCGLYGIAFEQVALDEQFQIRIEDYKKPNAGIIFPNPNAPTGCLMPLQVVEQLLQANRDSVVVVDEAYIDFGGETAISLVDRYDNLLVTQTLSKSRSLAGLRVGLAVGHPDLIEALERIKNSFNSYPLDRAAIVGAAVAFEDREYFEDTCRKVIDSREVLVGQLQAKGFEVLPSAANFIFARHPQQDAGELAARLREQGVIVRHFKQPRIAQFLRITIGTPEMNQALLDALS</sequence>
<feature type="chain" id="PRO_1000063491" description="Histidinol-phosphate aminotransferase">
    <location>
        <begin position="1"/>
        <end position="348"/>
    </location>
</feature>
<feature type="modified residue" description="N6-(pyridoxal phosphate)lysine" evidence="1">
    <location>
        <position position="210"/>
    </location>
</feature>
<comment type="catalytic activity">
    <reaction evidence="1">
        <text>L-histidinol phosphate + 2-oxoglutarate = 3-(imidazol-4-yl)-2-oxopropyl phosphate + L-glutamate</text>
        <dbReference type="Rhea" id="RHEA:23744"/>
        <dbReference type="ChEBI" id="CHEBI:16810"/>
        <dbReference type="ChEBI" id="CHEBI:29985"/>
        <dbReference type="ChEBI" id="CHEBI:57766"/>
        <dbReference type="ChEBI" id="CHEBI:57980"/>
        <dbReference type="EC" id="2.6.1.9"/>
    </reaction>
</comment>
<comment type="cofactor">
    <cofactor evidence="1">
        <name>pyridoxal 5'-phosphate</name>
        <dbReference type="ChEBI" id="CHEBI:597326"/>
    </cofactor>
</comment>
<comment type="pathway">
    <text evidence="1">Amino-acid biosynthesis; L-histidine biosynthesis; L-histidine from 5-phospho-alpha-D-ribose 1-diphosphate: step 7/9.</text>
</comment>
<comment type="subunit">
    <text evidence="1">Homodimer.</text>
</comment>
<comment type="similarity">
    <text evidence="1">Belongs to the class-II pyridoxal-phosphate-dependent aminotransferase family. Histidinol-phosphate aminotransferase subfamily.</text>
</comment>
<reference key="1">
    <citation type="submission" date="2007-05" db="EMBL/GenBank/DDBJ databases">
        <title>Complete sequence of Pseudomonas putida F1.</title>
        <authorList>
            <consortium name="US DOE Joint Genome Institute"/>
            <person name="Copeland A."/>
            <person name="Lucas S."/>
            <person name="Lapidus A."/>
            <person name="Barry K."/>
            <person name="Detter J.C."/>
            <person name="Glavina del Rio T."/>
            <person name="Hammon N."/>
            <person name="Israni S."/>
            <person name="Dalin E."/>
            <person name="Tice H."/>
            <person name="Pitluck S."/>
            <person name="Chain P."/>
            <person name="Malfatti S."/>
            <person name="Shin M."/>
            <person name="Vergez L."/>
            <person name="Schmutz J."/>
            <person name="Larimer F."/>
            <person name="Land M."/>
            <person name="Hauser L."/>
            <person name="Kyrpides N."/>
            <person name="Lykidis A."/>
            <person name="Parales R."/>
            <person name="Richardson P."/>
        </authorList>
    </citation>
    <scope>NUCLEOTIDE SEQUENCE [LARGE SCALE GENOMIC DNA]</scope>
    <source>
        <strain>ATCC 700007 / DSM 6899 / JCM 31910 / BCRC 17059 / LMG 24140 / F1</strain>
    </source>
</reference>
<protein>
    <recommendedName>
        <fullName evidence="1">Histidinol-phosphate aminotransferase</fullName>
        <ecNumber evidence="1">2.6.1.9</ecNumber>
    </recommendedName>
    <alternativeName>
        <fullName evidence="1">Imidazole acetol-phosphate transaminase</fullName>
    </alternativeName>
</protein>
<organism>
    <name type="scientific">Pseudomonas putida (strain ATCC 700007 / DSM 6899 / JCM 31910 / BCRC 17059 / LMG 24140 / F1)</name>
    <dbReference type="NCBI Taxonomy" id="351746"/>
    <lineage>
        <taxon>Bacteria</taxon>
        <taxon>Pseudomonadati</taxon>
        <taxon>Pseudomonadota</taxon>
        <taxon>Gammaproteobacteria</taxon>
        <taxon>Pseudomonadales</taxon>
        <taxon>Pseudomonadaceae</taxon>
        <taxon>Pseudomonas</taxon>
    </lineage>
</organism>
<gene>
    <name evidence="1" type="primary">hisC</name>
    <name type="ordered locus">Pput_1006</name>
</gene>
<keyword id="KW-0028">Amino-acid biosynthesis</keyword>
<keyword id="KW-0032">Aminotransferase</keyword>
<keyword id="KW-0368">Histidine biosynthesis</keyword>
<keyword id="KW-0663">Pyridoxal phosphate</keyword>
<keyword id="KW-0808">Transferase</keyword>
<proteinExistence type="inferred from homology"/>
<dbReference type="EC" id="2.6.1.9" evidence="1"/>
<dbReference type="EMBL" id="CP000712">
    <property type="protein sequence ID" value="ABQ77167.1"/>
    <property type="molecule type" value="Genomic_DNA"/>
</dbReference>
<dbReference type="SMR" id="A5VZ57"/>
<dbReference type="KEGG" id="ppf:Pput_1006"/>
<dbReference type="eggNOG" id="COG0079">
    <property type="taxonomic scope" value="Bacteria"/>
</dbReference>
<dbReference type="HOGENOM" id="CLU_017584_3_0_6"/>
<dbReference type="UniPathway" id="UPA00031">
    <property type="reaction ID" value="UER00012"/>
</dbReference>
<dbReference type="GO" id="GO:0004400">
    <property type="term" value="F:histidinol-phosphate transaminase activity"/>
    <property type="evidence" value="ECO:0007669"/>
    <property type="project" value="UniProtKB-UniRule"/>
</dbReference>
<dbReference type="GO" id="GO:0030170">
    <property type="term" value="F:pyridoxal phosphate binding"/>
    <property type="evidence" value="ECO:0007669"/>
    <property type="project" value="InterPro"/>
</dbReference>
<dbReference type="GO" id="GO:0000105">
    <property type="term" value="P:L-histidine biosynthetic process"/>
    <property type="evidence" value="ECO:0007669"/>
    <property type="project" value="UniProtKB-UniRule"/>
</dbReference>
<dbReference type="CDD" id="cd00609">
    <property type="entry name" value="AAT_like"/>
    <property type="match status" value="1"/>
</dbReference>
<dbReference type="Gene3D" id="3.90.1150.10">
    <property type="entry name" value="Aspartate Aminotransferase, domain 1"/>
    <property type="match status" value="1"/>
</dbReference>
<dbReference type="Gene3D" id="3.40.640.10">
    <property type="entry name" value="Type I PLP-dependent aspartate aminotransferase-like (Major domain)"/>
    <property type="match status" value="1"/>
</dbReference>
<dbReference type="HAMAP" id="MF_01023">
    <property type="entry name" value="HisC_aminotrans_2"/>
    <property type="match status" value="1"/>
</dbReference>
<dbReference type="InterPro" id="IPR001917">
    <property type="entry name" value="Aminotrans_II_pyridoxalP_BS"/>
</dbReference>
<dbReference type="InterPro" id="IPR004839">
    <property type="entry name" value="Aminotransferase_I/II_large"/>
</dbReference>
<dbReference type="InterPro" id="IPR005861">
    <property type="entry name" value="HisP_aminotrans"/>
</dbReference>
<dbReference type="InterPro" id="IPR050106">
    <property type="entry name" value="HistidinolP_aminotransfase"/>
</dbReference>
<dbReference type="InterPro" id="IPR015424">
    <property type="entry name" value="PyrdxlP-dep_Trfase"/>
</dbReference>
<dbReference type="InterPro" id="IPR015421">
    <property type="entry name" value="PyrdxlP-dep_Trfase_major"/>
</dbReference>
<dbReference type="InterPro" id="IPR015422">
    <property type="entry name" value="PyrdxlP-dep_Trfase_small"/>
</dbReference>
<dbReference type="NCBIfam" id="TIGR01141">
    <property type="entry name" value="hisC"/>
    <property type="match status" value="1"/>
</dbReference>
<dbReference type="PANTHER" id="PTHR43643:SF3">
    <property type="entry name" value="HISTIDINOL-PHOSPHATE AMINOTRANSFERASE"/>
    <property type="match status" value="1"/>
</dbReference>
<dbReference type="PANTHER" id="PTHR43643">
    <property type="entry name" value="HISTIDINOL-PHOSPHATE AMINOTRANSFERASE 2"/>
    <property type="match status" value="1"/>
</dbReference>
<dbReference type="Pfam" id="PF00155">
    <property type="entry name" value="Aminotran_1_2"/>
    <property type="match status" value="1"/>
</dbReference>
<dbReference type="SUPFAM" id="SSF53383">
    <property type="entry name" value="PLP-dependent transferases"/>
    <property type="match status" value="1"/>
</dbReference>
<dbReference type="PROSITE" id="PS00599">
    <property type="entry name" value="AA_TRANSFER_CLASS_2"/>
    <property type="match status" value="1"/>
</dbReference>
<evidence type="ECO:0000255" key="1">
    <source>
        <dbReference type="HAMAP-Rule" id="MF_01023"/>
    </source>
</evidence>